<protein>
    <recommendedName>
        <fullName>Phenylalanine ammonia-lyase</fullName>
        <ecNumber evidence="2">4.3.1.24</ecNumber>
    </recommendedName>
</protein>
<accession>P14717</accession>
<accession>Q0DZE3</accession>
<accession>Q6K1Q8</accession>
<gene>
    <name type="primary">PAL</name>
    <name type="ordered locus">Os02g0626100</name>
    <name type="ordered locus">LOC_Os02g41630</name>
    <name type="ORF">B1215B07.42</name>
    <name evidence="6" type="ORF">OsJ_07592</name>
    <name type="ORF">P0042D01.1</name>
</gene>
<dbReference type="EC" id="4.3.1.24" evidence="2"/>
<dbReference type="EMBL" id="X16099">
    <property type="protein sequence ID" value="CAA34226.1"/>
    <property type="status" value="ALT_FRAME"/>
    <property type="molecule type" value="Genomic_DNA"/>
</dbReference>
<dbReference type="EMBL" id="AP005000">
    <property type="protein sequence ID" value="BAD23149.1"/>
    <property type="molecule type" value="Genomic_DNA"/>
</dbReference>
<dbReference type="EMBL" id="AP006523">
    <property type="protein sequence ID" value="BAD23794.1"/>
    <property type="molecule type" value="Genomic_DNA"/>
</dbReference>
<dbReference type="EMBL" id="AP008208">
    <property type="protein sequence ID" value="BAF09395.1"/>
    <property type="molecule type" value="Genomic_DNA"/>
</dbReference>
<dbReference type="EMBL" id="AP014958">
    <property type="protein sequence ID" value="BAS79861.1"/>
    <property type="molecule type" value="Genomic_DNA"/>
</dbReference>
<dbReference type="EMBL" id="CM000139">
    <property type="protein sequence ID" value="EAZ23873.1"/>
    <property type="molecule type" value="Genomic_DNA"/>
</dbReference>
<dbReference type="EMBL" id="AK102817">
    <property type="protein sequence ID" value="BAG95732.1"/>
    <property type="molecule type" value="mRNA"/>
</dbReference>
<dbReference type="RefSeq" id="XP_015625120.1">
    <property type="nucleotide sequence ID" value="XM_015769634.1"/>
</dbReference>
<dbReference type="SMR" id="P14717"/>
<dbReference type="FunCoup" id="P14717">
    <property type="interactions" value="407"/>
</dbReference>
<dbReference type="STRING" id="39947.P14717"/>
<dbReference type="CarbonylDB" id="P14717"/>
<dbReference type="PaxDb" id="39947-P14717"/>
<dbReference type="EnsemblPlants" id="Os02t0626100-01">
    <property type="protein sequence ID" value="Os02t0626100-01"/>
    <property type="gene ID" value="Os02g0626100"/>
</dbReference>
<dbReference type="Gramene" id="Os02t0626100-01">
    <property type="protein sequence ID" value="Os02t0626100-01"/>
    <property type="gene ID" value="Os02g0626100"/>
</dbReference>
<dbReference type="KEGG" id="dosa:Os02g0626100"/>
<dbReference type="eggNOG" id="KOG0222">
    <property type="taxonomic scope" value="Eukaryota"/>
</dbReference>
<dbReference type="InParanoid" id="P14717"/>
<dbReference type="OMA" id="VECAQNI"/>
<dbReference type="OrthoDB" id="10051290at2759"/>
<dbReference type="PlantReactome" id="R-OSA-1119261">
    <property type="pathway name" value="Salicylate biosynthesis"/>
</dbReference>
<dbReference type="PlantReactome" id="R-OSA-1119418">
    <property type="pathway name" value="Suberin biosynthesis"/>
</dbReference>
<dbReference type="PlantReactome" id="R-OSA-1119582">
    <property type="pathway name" value="Phenylpropanoid biosynthesis, initial reactions"/>
</dbReference>
<dbReference type="UniPathway" id="UPA00713">
    <property type="reaction ID" value="UER00725"/>
</dbReference>
<dbReference type="Proteomes" id="UP000000763">
    <property type="component" value="Chromosome 2"/>
</dbReference>
<dbReference type="Proteomes" id="UP000007752">
    <property type="component" value="Chromosome 2"/>
</dbReference>
<dbReference type="Proteomes" id="UP000059680">
    <property type="component" value="Chromosome 2"/>
</dbReference>
<dbReference type="ExpressionAtlas" id="P14717">
    <property type="expression patterns" value="baseline and differential"/>
</dbReference>
<dbReference type="GO" id="GO:0005737">
    <property type="term" value="C:cytoplasm"/>
    <property type="evidence" value="ECO:0007669"/>
    <property type="project" value="UniProtKB-SubCell"/>
</dbReference>
<dbReference type="GO" id="GO:0016841">
    <property type="term" value="F:ammonia-lyase activity"/>
    <property type="evidence" value="ECO:0000318"/>
    <property type="project" value="GO_Central"/>
</dbReference>
<dbReference type="GO" id="GO:0045548">
    <property type="term" value="F:phenylalanine ammonia-lyase activity"/>
    <property type="evidence" value="ECO:0007669"/>
    <property type="project" value="UniProtKB-EC"/>
</dbReference>
<dbReference type="GO" id="GO:0009800">
    <property type="term" value="P:cinnamic acid biosynthetic process"/>
    <property type="evidence" value="ECO:0007669"/>
    <property type="project" value="UniProtKB-UniPathway"/>
</dbReference>
<dbReference type="GO" id="GO:0006559">
    <property type="term" value="P:L-phenylalanine catabolic process"/>
    <property type="evidence" value="ECO:0007669"/>
    <property type="project" value="UniProtKB-KW"/>
</dbReference>
<dbReference type="CDD" id="cd00332">
    <property type="entry name" value="PAL-HAL"/>
    <property type="match status" value="1"/>
</dbReference>
<dbReference type="FunFam" id="1.10.274.20:FF:000001">
    <property type="entry name" value="Phenylalanine ammonia-lyase"/>
    <property type="match status" value="1"/>
</dbReference>
<dbReference type="FunFam" id="1.10.275.10:FF:000009">
    <property type="entry name" value="Phenylalanine ammonia-lyase"/>
    <property type="match status" value="1"/>
</dbReference>
<dbReference type="FunFam" id="1.20.200.10:FF:000009">
    <property type="entry name" value="Phenylalanine ammonia-lyase"/>
    <property type="match status" value="1"/>
</dbReference>
<dbReference type="Gene3D" id="1.20.200.10">
    <property type="entry name" value="Fumarase/aspartase (Central domain)"/>
    <property type="match status" value="1"/>
</dbReference>
<dbReference type="Gene3D" id="1.10.275.10">
    <property type="entry name" value="Fumarase/aspartase (N-terminal domain)"/>
    <property type="match status" value="1"/>
</dbReference>
<dbReference type="Gene3D" id="1.10.274.20">
    <property type="entry name" value="Phenylalanine ammonia-lyase 1, domain 3"/>
    <property type="match status" value="1"/>
</dbReference>
<dbReference type="InterPro" id="IPR001106">
    <property type="entry name" value="Aromatic_Lyase"/>
</dbReference>
<dbReference type="InterPro" id="IPR024083">
    <property type="entry name" value="Fumarase/histidase_N"/>
</dbReference>
<dbReference type="InterPro" id="IPR008948">
    <property type="entry name" value="L-Aspartase-like"/>
</dbReference>
<dbReference type="InterPro" id="IPR022313">
    <property type="entry name" value="Phe/His_NH3-lyase_AS"/>
</dbReference>
<dbReference type="InterPro" id="IPR005922">
    <property type="entry name" value="Phe_NH3-lyase"/>
</dbReference>
<dbReference type="InterPro" id="IPR023144">
    <property type="entry name" value="Phe_NH3-lyase_shielding_dom_sf"/>
</dbReference>
<dbReference type="NCBIfam" id="TIGR01226">
    <property type="entry name" value="phe_am_lyase"/>
    <property type="match status" value="1"/>
</dbReference>
<dbReference type="PANTHER" id="PTHR10362">
    <property type="entry name" value="HISTIDINE AMMONIA-LYASE"/>
    <property type="match status" value="1"/>
</dbReference>
<dbReference type="Pfam" id="PF00221">
    <property type="entry name" value="Lyase_aromatic"/>
    <property type="match status" value="1"/>
</dbReference>
<dbReference type="SUPFAM" id="SSF48557">
    <property type="entry name" value="L-aspartase-like"/>
    <property type="match status" value="1"/>
</dbReference>
<dbReference type="PROSITE" id="PS00488">
    <property type="entry name" value="PAL_HISTIDASE"/>
    <property type="match status" value="1"/>
</dbReference>
<reference key="1">
    <citation type="journal article" date="1989" name="Eur. J. Biochem.">
        <title>Structure and some characterization of the gene for phenylalanine ammonia-lyase from rice plants.</title>
        <authorList>
            <person name="Minami E."/>
            <person name="Ozeki Y."/>
            <person name="Matsuoka M."/>
            <person name="Koizuka N."/>
            <person name="Tanaka Y."/>
        </authorList>
    </citation>
    <scope>NUCLEOTIDE SEQUENCE [GENOMIC DNA]</scope>
    <source>
        <strain>cv. Nipponbare</strain>
    </source>
</reference>
<reference key="2">
    <citation type="journal article" date="2005" name="Nature">
        <title>The map-based sequence of the rice genome.</title>
        <authorList>
            <consortium name="International rice genome sequencing project (IRGSP)"/>
        </authorList>
    </citation>
    <scope>NUCLEOTIDE SEQUENCE [LARGE SCALE GENOMIC DNA]</scope>
    <source>
        <strain>cv. Nipponbare</strain>
    </source>
</reference>
<reference key="3">
    <citation type="journal article" date="2008" name="Nucleic Acids Res.">
        <title>The rice annotation project database (RAP-DB): 2008 update.</title>
        <authorList>
            <consortium name="The rice annotation project (RAP)"/>
        </authorList>
    </citation>
    <scope>GENOME REANNOTATION</scope>
    <source>
        <strain>cv. Nipponbare</strain>
    </source>
</reference>
<reference key="4">
    <citation type="journal article" date="2013" name="Rice">
        <title>Improvement of the Oryza sativa Nipponbare reference genome using next generation sequence and optical map data.</title>
        <authorList>
            <person name="Kawahara Y."/>
            <person name="de la Bastide M."/>
            <person name="Hamilton J.P."/>
            <person name="Kanamori H."/>
            <person name="McCombie W.R."/>
            <person name="Ouyang S."/>
            <person name="Schwartz D.C."/>
            <person name="Tanaka T."/>
            <person name="Wu J."/>
            <person name="Zhou S."/>
            <person name="Childs K.L."/>
            <person name="Davidson R.M."/>
            <person name="Lin H."/>
            <person name="Quesada-Ocampo L."/>
            <person name="Vaillancourt B."/>
            <person name="Sakai H."/>
            <person name="Lee S.S."/>
            <person name="Kim J."/>
            <person name="Numa H."/>
            <person name="Itoh T."/>
            <person name="Buell C.R."/>
            <person name="Matsumoto T."/>
        </authorList>
    </citation>
    <scope>GENOME REANNOTATION</scope>
    <source>
        <strain>cv. Nipponbare</strain>
    </source>
</reference>
<reference key="5">
    <citation type="journal article" date="2005" name="PLoS Biol.">
        <title>The genomes of Oryza sativa: a history of duplications.</title>
        <authorList>
            <person name="Yu J."/>
            <person name="Wang J."/>
            <person name="Lin W."/>
            <person name="Li S."/>
            <person name="Li H."/>
            <person name="Zhou J."/>
            <person name="Ni P."/>
            <person name="Dong W."/>
            <person name="Hu S."/>
            <person name="Zeng C."/>
            <person name="Zhang J."/>
            <person name="Zhang Y."/>
            <person name="Li R."/>
            <person name="Xu Z."/>
            <person name="Li S."/>
            <person name="Li X."/>
            <person name="Zheng H."/>
            <person name="Cong L."/>
            <person name="Lin L."/>
            <person name="Yin J."/>
            <person name="Geng J."/>
            <person name="Li G."/>
            <person name="Shi J."/>
            <person name="Liu J."/>
            <person name="Lv H."/>
            <person name="Li J."/>
            <person name="Wang J."/>
            <person name="Deng Y."/>
            <person name="Ran L."/>
            <person name="Shi X."/>
            <person name="Wang X."/>
            <person name="Wu Q."/>
            <person name="Li C."/>
            <person name="Ren X."/>
            <person name="Wang J."/>
            <person name="Wang X."/>
            <person name="Li D."/>
            <person name="Liu D."/>
            <person name="Zhang X."/>
            <person name="Ji Z."/>
            <person name="Zhao W."/>
            <person name="Sun Y."/>
            <person name="Zhang Z."/>
            <person name="Bao J."/>
            <person name="Han Y."/>
            <person name="Dong L."/>
            <person name="Ji J."/>
            <person name="Chen P."/>
            <person name="Wu S."/>
            <person name="Liu J."/>
            <person name="Xiao Y."/>
            <person name="Bu D."/>
            <person name="Tan J."/>
            <person name="Yang L."/>
            <person name="Ye C."/>
            <person name="Zhang J."/>
            <person name="Xu J."/>
            <person name="Zhou Y."/>
            <person name="Yu Y."/>
            <person name="Zhang B."/>
            <person name="Zhuang S."/>
            <person name="Wei H."/>
            <person name="Liu B."/>
            <person name="Lei M."/>
            <person name="Yu H."/>
            <person name="Li Y."/>
            <person name="Xu H."/>
            <person name="Wei S."/>
            <person name="He X."/>
            <person name="Fang L."/>
            <person name="Zhang Z."/>
            <person name="Zhang Y."/>
            <person name="Huang X."/>
            <person name="Su Z."/>
            <person name="Tong W."/>
            <person name="Li J."/>
            <person name="Tong Z."/>
            <person name="Li S."/>
            <person name="Ye J."/>
            <person name="Wang L."/>
            <person name="Fang L."/>
            <person name="Lei T."/>
            <person name="Chen C.-S."/>
            <person name="Chen H.-C."/>
            <person name="Xu Z."/>
            <person name="Li H."/>
            <person name="Huang H."/>
            <person name="Zhang F."/>
            <person name="Xu H."/>
            <person name="Li N."/>
            <person name="Zhao C."/>
            <person name="Li S."/>
            <person name="Dong L."/>
            <person name="Huang Y."/>
            <person name="Li L."/>
            <person name="Xi Y."/>
            <person name="Qi Q."/>
            <person name="Li W."/>
            <person name="Zhang B."/>
            <person name="Hu W."/>
            <person name="Zhang Y."/>
            <person name="Tian X."/>
            <person name="Jiao Y."/>
            <person name="Liang X."/>
            <person name="Jin J."/>
            <person name="Gao L."/>
            <person name="Zheng W."/>
            <person name="Hao B."/>
            <person name="Liu S.-M."/>
            <person name="Wang W."/>
            <person name="Yuan L."/>
            <person name="Cao M."/>
            <person name="McDermott J."/>
            <person name="Samudrala R."/>
            <person name="Wang J."/>
            <person name="Wong G.K.-S."/>
            <person name="Yang H."/>
        </authorList>
    </citation>
    <scope>NUCLEOTIDE SEQUENCE [LARGE SCALE GENOMIC DNA]</scope>
    <source>
        <strain>cv. Nipponbare</strain>
    </source>
</reference>
<reference key="6">
    <citation type="journal article" date="2003" name="Science">
        <title>Collection, mapping, and annotation of over 28,000 cDNA clones from japonica rice.</title>
        <authorList>
            <consortium name="The rice full-length cDNA consortium"/>
        </authorList>
    </citation>
    <scope>NUCLEOTIDE SEQUENCE [LARGE SCALE MRNA]</scope>
    <source>
        <strain>cv. Nipponbare</strain>
    </source>
</reference>
<reference key="7">
    <citation type="journal article" date="2004" name="Nucleic Acids Res.">
        <title>Rice proteome database based on two-dimensional polyacrylamide gel electrophoresis: its status in 2003.</title>
        <authorList>
            <person name="Komatsu S."/>
            <person name="Kojima K."/>
            <person name="Suzuki K."/>
            <person name="Ozaki K."/>
            <person name="Higo K."/>
        </authorList>
    </citation>
    <scope>PROTEIN SEQUENCE OF 327-332</scope>
    <source>
        <strain>cv. Nipponbare</strain>
        <tissue>Stem</tissue>
    </source>
</reference>
<evidence type="ECO:0000250" key="1">
    <source>
        <dbReference type="UniProtKB" id="P11544"/>
    </source>
</evidence>
<evidence type="ECO:0000250" key="2">
    <source>
        <dbReference type="UniProtKB" id="P24481"/>
    </source>
</evidence>
<evidence type="ECO:0000250" key="3">
    <source>
        <dbReference type="UniProtKB" id="Q68G84"/>
    </source>
</evidence>
<evidence type="ECO:0000255" key="4">
    <source>
        <dbReference type="PROSITE-ProRule" id="PRU10122"/>
    </source>
</evidence>
<evidence type="ECO:0000305" key="5"/>
<evidence type="ECO:0000312" key="6">
    <source>
        <dbReference type="EMBL" id="EAZ23873.1"/>
    </source>
</evidence>
<proteinExistence type="evidence at protein level"/>
<name>PAL1_ORYSJ</name>
<feature type="chain" id="PRO_0000215401" description="Phenylalanine ammonia-lyase">
    <location>
        <begin position="1"/>
        <end position="701"/>
    </location>
</feature>
<feature type="active site" description="Proton donor/acceptor" evidence="3">
    <location>
        <position position="96"/>
    </location>
</feature>
<feature type="binding site" evidence="3">
    <location>
        <position position="247"/>
    </location>
    <ligand>
        <name>(E)-cinnamate</name>
        <dbReference type="ChEBI" id="CHEBI:15669"/>
    </ligand>
</feature>
<feature type="binding site" evidence="3">
    <location>
        <position position="335"/>
    </location>
    <ligand>
        <name>(E)-cinnamate</name>
        <dbReference type="ChEBI" id="CHEBI:15669"/>
    </ligand>
</feature>
<feature type="binding site" evidence="3">
    <location>
        <position position="341"/>
    </location>
    <ligand>
        <name>(E)-cinnamate</name>
        <dbReference type="ChEBI" id="CHEBI:15669"/>
    </ligand>
</feature>
<feature type="binding site" evidence="3">
    <location>
        <position position="371"/>
    </location>
    <ligand>
        <name>(E)-cinnamate</name>
        <dbReference type="ChEBI" id="CHEBI:15669"/>
    </ligand>
</feature>
<feature type="binding site" evidence="1">
    <location>
        <position position="443"/>
    </location>
    <ligand>
        <name>(E)-cinnamate</name>
        <dbReference type="ChEBI" id="CHEBI:15669"/>
    </ligand>
</feature>
<feature type="binding site" evidence="1">
    <location>
        <position position="471"/>
    </location>
    <ligand>
        <name>(E)-cinnamate</name>
        <dbReference type="ChEBI" id="CHEBI:15669"/>
    </ligand>
</feature>
<feature type="binding site" evidence="3">
    <location>
        <position position="474"/>
    </location>
    <ligand>
        <name>(E)-cinnamate</name>
        <dbReference type="ChEBI" id="CHEBI:15669"/>
    </ligand>
</feature>
<feature type="modified residue" description="2,3-didehydroalanine (Ser)" evidence="4">
    <location>
        <position position="190"/>
    </location>
</feature>
<feature type="cross-link" description="5-imidazolinone (Ala-Gly)" evidence="3">
    <location>
        <begin position="189"/>
        <end position="191"/>
    </location>
</feature>
<feature type="sequence conflict" description="In Ref. 1; CAA34226." evidence="5" ref="1">
    <original>G</original>
    <variation>R</variation>
    <location>
        <position position="65"/>
    </location>
</feature>
<feature type="sequence conflict" description="In Ref. 1; CAA34226." evidence="5" ref="1">
    <original>N</original>
    <variation>T</variation>
    <location>
        <position position="87"/>
    </location>
</feature>
<feature type="sequence conflict" description="In Ref. 1; CAA34226." evidence="5" ref="1">
    <original>H</original>
    <variation>Y</variation>
    <location>
        <position position="123"/>
    </location>
</feature>
<feature type="sequence conflict" description="In Ref. 1; CAA34226." evidence="5" ref="1">
    <original>E</original>
    <variation>D</variation>
    <location>
        <position position="303"/>
    </location>
</feature>
<feature type="sequence conflict" description="In Ref. 1; CAA34226." evidence="5" ref="1">
    <original>E</original>
    <variation>Q</variation>
    <location>
        <position position="352"/>
    </location>
</feature>
<feature type="sequence conflict" description="In Ref. 1; CAA34226." evidence="5" ref="1">
    <original>C</original>
    <variation>S</variation>
    <location>
        <position position="453"/>
    </location>
</feature>
<comment type="function">
    <text evidence="2">This is a key enzyme of plant metabolism catalyzing the first reaction in the biosynthesis from L-phenylalanine of a wide variety of natural products based on the phenylpropane skeleton.</text>
</comment>
<comment type="catalytic activity">
    <reaction evidence="2">
        <text>L-phenylalanine = (E)-cinnamate + NH4(+)</text>
        <dbReference type="Rhea" id="RHEA:21384"/>
        <dbReference type="ChEBI" id="CHEBI:15669"/>
        <dbReference type="ChEBI" id="CHEBI:28938"/>
        <dbReference type="ChEBI" id="CHEBI:58095"/>
        <dbReference type="EC" id="4.3.1.24"/>
    </reaction>
</comment>
<comment type="pathway">
    <text evidence="5">Phenylpropanoid metabolism; trans-cinnamate biosynthesis; trans-cinnamate from L-phenylalanine: step 1/1.</text>
</comment>
<comment type="subunit">
    <text evidence="2">Homotetramer.</text>
</comment>
<comment type="subcellular location">
    <subcellularLocation>
        <location evidence="5">Cytoplasm</location>
    </subcellularLocation>
</comment>
<comment type="PTM">
    <text evidence="3">Contains an active site 4-methylidene-imidazol-5-one (MIO), which is formed autocatalytically by cyclization and dehydration of residues Ala-Ser-Gly.</text>
</comment>
<comment type="similarity">
    <text evidence="5">Belongs to the PAL/histidase family.</text>
</comment>
<comment type="sequence caution" evidence="5">
    <conflict type="frameshift">
        <sequence resource="EMBL-CDS" id="CAA34226"/>
    </conflict>
</comment>
<keyword id="KW-0963">Cytoplasm</keyword>
<keyword id="KW-0903">Direct protein sequencing</keyword>
<keyword id="KW-0456">Lyase</keyword>
<keyword id="KW-0585">Phenylalanine catabolism</keyword>
<keyword id="KW-0587">Phenylpropanoid metabolism</keyword>
<keyword id="KW-1185">Reference proteome</keyword>
<sequence>MAGNGPINKEDPLNWGAAAAEMAGSHLDEVKRMVAQFREPLVKIQGATLRVGQVAAVAQAKDAAGVAVELDEEARPRVKASSEWILNCIAHGGDIYGVTTGFGGTSHRRTKDGPALQVELLRHLNAGIFGTGSDGHTLPSETVRAAMLVRINTLLQGYSGIRFEILEAITKLLNTGVTPCLPLRGTITASGDLVPLSYIAGLITGRPNAQAISPDGRKVDAAEAFKLAGIEGGFFTLNPKEGLAIVNGTSVGSALAATVMFDANILAVLSEVLSAVFCEVMNGKPEYTDHLTHKLKHHPGSIEAAAIMEHILAGSSFMSHAKKVNEMDPLLKPKQDRYALRTSPQWLGPQIEVIRAATKSIEREVNSVNDNPVIDVHRGKALHGGNFQGTPIGVSMDNARLAIANIGKLMFAQFSELVNEFYNNGLTSNLAGSRNPSLDYGFKGTEIAMASYCSELQYLANPITNHVQSAEQHNQDVNSLGLVSARKTLEAVDILKLMTSTYIVALCQAVDLRHLEENIKSSVKNCVTQVAKKVLTMNPTGDLSSARFSEKNLLTAIDREAVFSYADDPCSANYPLMQKLRAVLVEHALTSGDAEPEASVFSKITKFEEELRSALPREIEAARVAVANGTAPVANRIVESRSFPLYRFVREELGCVFLTGEKLKSPGEECNKVFLGISQGKLIDPMLDCLKEWNGEPLPIN</sequence>
<organism>
    <name type="scientific">Oryza sativa subsp. japonica</name>
    <name type="common">Rice</name>
    <dbReference type="NCBI Taxonomy" id="39947"/>
    <lineage>
        <taxon>Eukaryota</taxon>
        <taxon>Viridiplantae</taxon>
        <taxon>Streptophyta</taxon>
        <taxon>Embryophyta</taxon>
        <taxon>Tracheophyta</taxon>
        <taxon>Spermatophyta</taxon>
        <taxon>Magnoliopsida</taxon>
        <taxon>Liliopsida</taxon>
        <taxon>Poales</taxon>
        <taxon>Poaceae</taxon>
        <taxon>BOP clade</taxon>
        <taxon>Oryzoideae</taxon>
        <taxon>Oryzeae</taxon>
        <taxon>Oryzinae</taxon>
        <taxon>Oryza</taxon>
        <taxon>Oryza sativa</taxon>
    </lineage>
</organism>